<keyword id="KW-0025">Alternative splicing</keyword>
<keyword id="KW-1003">Cell membrane</keyword>
<keyword id="KW-1015">Disulfide bond</keyword>
<keyword id="KW-0297">G-protein coupled receptor</keyword>
<keyword id="KW-0472">Membrane</keyword>
<keyword id="KW-0675">Receptor</keyword>
<keyword id="KW-1185">Reference proteome</keyword>
<keyword id="KW-0807">Transducer</keyword>
<keyword id="KW-0812">Transmembrane</keyword>
<keyword id="KW-1133">Transmembrane helix</keyword>
<proteinExistence type="evidence at protein level"/>
<feature type="chain" id="PRO_0000270582" description="Dopamine receptor 3">
    <location>
        <begin position="1"/>
        <end position="607"/>
    </location>
</feature>
<feature type="topological domain" description="Extracellular" evidence="1">
    <location>
        <begin position="1"/>
        <end position="23"/>
    </location>
</feature>
<feature type="transmembrane region" description="Helical; Name=1" evidence="1">
    <location>
        <begin position="24"/>
        <end position="44"/>
    </location>
</feature>
<feature type="topological domain" description="Cytoplasmic" evidence="1">
    <location>
        <begin position="45"/>
        <end position="58"/>
    </location>
</feature>
<feature type="transmembrane region" description="Helical; Name=2" evidence="1">
    <location>
        <begin position="59"/>
        <end position="79"/>
    </location>
</feature>
<feature type="topological domain" description="Extracellular" evidence="1">
    <location>
        <begin position="80"/>
        <end position="96"/>
    </location>
</feature>
<feature type="transmembrane region" description="Helical; Name=3" evidence="1">
    <location>
        <begin position="97"/>
        <end position="117"/>
    </location>
</feature>
<feature type="topological domain" description="Cytoplasmic" evidence="1">
    <location>
        <begin position="118"/>
        <end position="141"/>
    </location>
</feature>
<feature type="transmembrane region" description="Helical; Name=4" evidence="1">
    <location>
        <begin position="142"/>
        <end position="162"/>
    </location>
</feature>
<feature type="topological domain" description="Extracellular" evidence="1">
    <location>
        <begin position="163"/>
        <end position="182"/>
    </location>
</feature>
<feature type="transmembrane region" description="Helical; Name=5" evidence="1">
    <location>
        <begin position="183"/>
        <end position="203"/>
    </location>
</feature>
<feature type="topological domain" description="Cytoplasmic" evidence="1">
    <location>
        <begin position="204"/>
        <end position="523"/>
    </location>
</feature>
<feature type="transmembrane region" description="Helical; Name=6" evidence="1">
    <location>
        <begin position="524"/>
        <end position="544"/>
    </location>
</feature>
<feature type="topological domain" description="Extracellular" evidence="1">
    <location>
        <begin position="545"/>
        <end position="558"/>
    </location>
</feature>
<feature type="transmembrane region" description="Helical; Name=7" evidence="1">
    <location>
        <begin position="559"/>
        <end position="579"/>
    </location>
</feature>
<feature type="topological domain" description="Cytoplasmic" evidence="1">
    <location>
        <begin position="580"/>
        <end position="607"/>
    </location>
</feature>
<feature type="region of interest" description="Disordered" evidence="3">
    <location>
        <begin position="402"/>
        <end position="435"/>
    </location>
</feature>
<feature type="compositionally biased region" description="Polar residues" evidence="3">
    <location>
        <begin position="413"/>
        <end position="424"/>
    </location>
</feature>
<feature type="disulfide bond" evidence="2">
    <location>
        <begin position="95"/>
        <end position="173"/>
    </location>
</feature>
<feature type="splice variant" id="VSP_052257" description="In isoform c and isoform d." evidence="13">
    <location>
        <begin position="1"/>
        <end position="15"/>
    </location>
</feature>
<feature type="splice variant" id="VSP_052258" description="In isoform a and isoform c." evidence="13">
    <location>
        <begin position="170"/>
        <end position="171"/>
    </location>
</feature>
<feature type="splice variant" id="VSP_052259" description="In isoform d." evidence="13">
    <original>T</original>
    <variation>V</variation>
    <location>
        <position position="260"/>
    </location>
</feature>
<feature type="splice variant" id="VSP_052260" description="In isoform d." evidence="13">
    <location>
        <begin position="261"/>
        <end position="607"/>
    </location>
</feature>
<feature type="mutagenesis site" description="Decreased inhibition of forskolin-stimulated cAMP formation in response to dopamine but not in response to 5-HT." evidence="5">
    <original>D</original>
    <variation>N</variation>
    <location>
        <position position="102"/>
    </location>
</feature>
<feature type="mutagenesis site" description="Decreased inhibition of forskolin-stimulated cAMP formation in response to dopamine but not in response to 5-HT." evidence="5">
    <original>S</original>
    <variation>A</variation>
    <location>
        <position position="184"/>
    </location>
</feature>
<dbReference type="EMBL" id="AY485309">
    <property type="protein sequence ID" value="AAR37416.1"/>
    <property type="molecule type" value="mRNA"/>
</dbReference>
<dbReference type="EMBL" id="BX284606">
    <property type="protein sequence ID" value="CCD83404.1"/>
    <property type="molecule type" value="Genomic_DNA"/>
</dbReference>
<dbReference type="EMBL" id="BX284606">
    <property type="protein sequence ID" value="CCD83405.1"/>
    <property type="molecule type" value="Genomic_DNA"/>
</dbReference>
<dbReference type="EMBL" id="BX284606">
    <property type="protein sequence ID" value="CCD83406.1"/>
    <property type="molecule type" value="Genomic_DNA"/>
</dbReference>
<dbReference type="EMBL" id="BX284606">
    <property type="protein sequence ID" value="CCD83407.1"/>
    <property type="molecule type" value="Genomic_DNA"/>
</dbReference>
<dbReference type="RefSeq" id="NP_001024907.2">
    <molecule id="Q6RYS9-2"/>
    <property type="nucleotide sequence ID" value="NM_001029736.6"/>
</dbReference>
<dbReference type="RefSeq" id="NP_001024908.2">
    <molecule id="Q6RYS9-1"/>
    <property type="nucleotide sequence ID" value="NM_001029737.5"/>
</dbReference>
<dbReference type="RefSeq" id="NP_001033560.1">
    <property type="nucleotide sequence ID" value="NM_001038471.3"/>
</dbReference>
<dbReference type="RefSeq" id="NP_001033561.1">
    <molecule id="Q6RYS9-4"/>
    <property type="nucleotide sequence ID" value="NM_001038472.6"/>
</dbReference>
<dbReference type="RefSeq" id="NP_001368078.1">
    <molecule id="Q6RYS9-3"/>
    <property type="nucleotide sequence ID" value="NM_001381012.1"/>
</dbReference>
<dbReference type="SMR" id="Q6RYS9"/>
<dbReference type="FunCoup" id="Q6RYS9">
    <property type="interactions" value="30"/>
</dbReference>
<dbReference type="STRING" id="6239.T14E8.3b.1"/>
<dbReference type="PaxDb" id="6239-T14E8.3b"/>
<dbReference type="EnsemblMetazoa" id="T14E8.3a.1">
    <molecule id="Q6RYS9-2"/>
    <property type="protein sequence ID" value="T14E8.3a.1"/>
    <property type="gene ID" value="WBGene00020506"/>
</dbReference>
<dbReference type="EnsemblMetazoa" id="T14E8.3b.1">
    <molecule id="Q6RYS9-1"/>
    <property type="protein sequence ID" value="T14E8.3b.1"/>
    <property type="gene ID" value="WBGene00020506"/>
</dbReference>
<dbReference type="EnsemblMetazoa" id="T14E8.3c.1">
    <molecule id="Q6RYS9-3"/>
    <property type="protein sequence ID" value="T14E8.3c.1"/>
    <property type="gene ID" value="WBGene00020506"/>
</dbReference>
<dbReference type="EnsemblMetazoa" id="T14E8.3d.1">
    <molecule id="Q6RYS9-4"/>
    <property type="protein sequence ID" value="T14E8.3d.1"/>
    <property type="gene ID" value="WBGene00020506"/>
</dbReference>
<dbReference type="GeneID" id="188499"/>
<dbReference type="KEGG" id="cel:CELE_T14E8.3"/>
<dbReference type="UCSC" id="T14E8.3a">
    <molecule id="Q6RYS9-1"/>
    <property type="organism name" value="c. elegans"/>
</dbReference>
<dbReference type="AGR" id="WB:WBGene00020506"/>
<dbReference type="CTD" id="188499"/>
<dbReference type="WormBase" id="T14E8.3a">
    <molecule id="Q6RYS9-2"/>
    <property type="protein sequence ID" value="CE39178"/>
    <property type="gene ID" value="WBGene00020506"/>
    <property type="gene designation" value="dop-3"/>
</dbReference>
<dbReference type="WormBase" id="T14E8.3b">
    <molecule id="Q6RYS9-1"/>
    <property type="protein sequence ID" value="CE39179"/>
    <property type="gene ID" value="WBGene00020506"/>
    <property type="gene designation" value="dop-3"/>
</dbReference>
<dbReference type="WormBase" id="T14E8.3c">
    <molecule id="Q6RYS9-3"/>
    <property type="protein sequence ID" value="CE39180"/>
    <property type="gene ID" value="WBGene00020506"/>
    <property type="gene designation" value="dop-3"/>
</dbReference>
<dbReference type="WormBase" id="T14E8.3d">
    <molecule id="Q6RYS9-4"/>
    <property type="protein sequence ID" value="CE39181"/>
    <property type="gene ID" value="WBGene00020506"/>
    <property type="gene designation" value="dop-3"/>
</dbReference>
<dbReference type="eggNOG" id="KOG3656">
    <property type="taxonomic scope" value="Eukaryota"/>
</dbReference>
<dbReference type="GeneTree" id="ENSGT00940000164988"/>
<dbReference type="InParanoid" id="Q6RYS9"/>
<dbReference type="OMA" id="FTHKEHI"/>
<dbReference type="OrthoDB" id="10034726at2759"/>
<dbReference type="PhylomeDB" id="Q6RYS9"/>
<dbReference type="Reactome" id="R-CEL-390651">
    <property type="pathway name" value="Dopamine receptors"/>
</dbReference>
<dbReference type="Reactome" id="R-CEL-418594">
    <property type="pathway name" value="G alpha (i) signalling events"/>
</dbReference>
<dbReference type="PRO" id="PR:Q6RYS9"/>
<dbReference type="Proteomes" id="UP000001940">
    <property type="component" value="Chromosome X"/>
</dbReference>
<dbReference type="Bgee" id="WBGene00020506">
    <property type="expression patterns" value="Expressed in larva and 2 other cell types or tissues"/>
</dbReference>
<dbReference type="GO" id="GO:0005886">
    <property type="term" value="C:plasma membrane"/>
    <property type="evidence" value="ECO:0000318"/>
    <property type="project" value="GO_Central"/>
</dbReference>
<dbReference type="GO" id="GO:0045211">
    <property type="term" value="C:postsynaptic membrane"/>
    <property type="evidence" value="ECO:0000305"/>
    <property type="project" value="WormBase"/>
</dbReference>
<dbReference type="GO" id="GO:0030672">
    <property type="term" value="C:synaptic vesicle membrane"/>
    <property type="evidence" value="ECO:0000305"/>
    <property type="project" value="UniProtKB"/>
</dbReference>
<dbReference type="GO" id="GO:0004952">
    <property type="term" value="F:dopamine neurotransmitter receptor activity"/>
    <property type="evidence" value="ECO:0000314"/>
    <property type="project" value="WormBase"/>
</dbReference>
<dbReference type="GO" id="GO:0001591">
    <property type="term" value="F:dopamine neurotransmitter receptor activity, coupled via Gi/Go"/>
    <property type="evidence" value="ECO:0000314"/>
    <property type="project" value="UniProtKB"/>
</dbReference>
<dbReference type="GO" id="GO:0004930">
    <property type="term" value="F:G protein-coupled receptor activity"/>
    <property type="evidence" value="ECO:0000318"/>
    <property type="project" value="GO_Central"/>
</dbReference>
<dbReference type="GO" id="GO:0007195">
    <property type="term" value="P:adenylate cyclase-inhibiting dopamine receptor signaling pathway"/>
    <property type="evidence" value="ECO:0000314"/>
    <property type="project" value="WormBase"/>
</dbReference>
<dbReference type="GO" id="GO:0007212">
    <property type="term" value="P:G protein-coupled dopamine receptor signaling pathway"/>
    <property type="evidence" value="ECO:0000315"/>
    <property type="project" value="WormBase"/>
</dbReference>
<dbReference type="GO" id="GO:0007186">
    <property type="term" value="P:G protein-coupled receptor signaling pathway"/>
    <property type="evidence" value="ECO:0000304"/>
    <property type="project" value="UniProtKB"/>
</dbReference>
<dbReference type="GO" id="GO:0007626">
    <property type="term" value="P:locomotory behavior"/>
    <property type="evidence" value="ECO:0000315"/>
    <property type="project" value="WormBase"/>
</dbReference>
<dbReference type="GO" id="GO:1902437">
    <property type="term" value="P:positive regulation of male mating behavior"/>
    <property type="evidence" value="ECO:0000315"/>
    <property type="project" value="UniProtKB"/>
</dbReference>
<dbReference type="GO" id="GO:0045944">
    <property type="term" value="P:positive regulation of transcription by RNA polymerase II"/>
    <property type="evidence" value="ECO:0000315"/>
    <property type="project" value="WormBase"/>
</dbReference>
<dbReference type="GO" id="GO:0040012">
    <property type="term" value="P:regulation of locomotion"/>
    <property type="evidence" value="ECO:0000314"/>
    <property type="project" value="UniProtKB"/>
</dbReference>
<dbReference type="GO" id="GO:0032094">
    <property type="term" value="P:response to food"/>
    <property type="evidence" value="ECO:0000315"/>
    <property type="project" value="WormBase"/>
</dbReference>
<dbReference type="GO" id="GO:1990834">
    <property type="term" value="P:response to odorant"/>
    <property type="evidence" value="ECO:0000315"/>
    <property type="project" value="WormBase"/>
</dbReference>
<dbReference type="GO" id="GO:0034609">
    <property type="term" value="P:spicule insertion"/>
    <property type="evidence" value="ECO:0000315"/>
    <property type="project" value="UniProtKB"/>
</dbReference>
<dbReference type="GO" id="GO:0034608">
    <property type="term" value="P:vulval location"/>
    <property type="evidence" value="ECO:0000315"/>
    <property type="project" value="UniProtKB"/>
</dbReference>
<dbReference type="CDD" id="cd15053">
    <property type="entry name" value="7tmA_D2-like_dopamine_R"/>
    <property type="match status" value="1"/>
</dbReference>
<dbReference type="FunFam" id="1.20.1070.10:FF:000486">
    <property type="entry name" value="Dopamine receptor 3"/>
    <property type="match status" value="1"/>
</dbReference>
<dbReference type="FunFam" id="1.20.1070.10:FF:000489">
    <property type="entry name" value="Dopamine receptor 3"/>
    <property type="match status" value="1"/>
</dbReference>
<dbReference type="Gene3D" id="1.20.1070.10">
    <property type="entry name" value="Rhodopsin 7-helix transmembrane proteins"/>
    <property type="match status" value="2"/>
</dbReference>
<dbReference type="InterPro" id="IPR000276">
    <property type="entry name" value="GPCR_Rhodpsn"/>
</dbReference>
<dbReference type="InterPro" id="IPR017452">
    <property type="entry name" value="GPCR_Rhodpsn_7TM"/>
</dbReference>
<dbReference type="PANTHER" id="PTHR24248">
    <property type="entry name" value="ADRENERGIC RECEPTOR-RELATED G-PROTEIN COUPLED RECEPTOR"/>
    <property type="match status" value="1"/>
</dbReference>
<dbReference type="PANTHER" id="PTHR24248:SF125">
    <property type="entry name" value="DOPAMINE D2-LIKE RECEPTOR"/>
    <property type="match status" value="1"/>
</dbReference>
<dbReference type="Pfam" id="PF00001">
    <property type="entry name" value="7tm_1"/>
    <property type="match status" value="2"/>
</dbReference>
<dbReference type="PRINTS" id="PR00237">
    <property type="entry name" value="GPCRRHODOPSN"/>
</dbReference>
<dbReference type="SMART" id="SM01381">
    <property type="entry name" value="7TM_GPCR_Srsx"/>
    <property type="match status" value="1"/>
</dbReference>
<dbReference type="SUPFAM" id="SSF81321">
    <property type="entry name" value="Family A G protein-coupled receptor-like"/>
    <property type="match status" value="1"/>
</dbReference>
<dbReference type="PROSITE" id="PS00237">
    <property type="entry name" value="G_PROTEIN_RECEP_F1_1"/>
    <property type="match status" value="1"/>
</dbReference>
<dbReference type="PROSITE" id="PS50262">
    <property type="entry name" value="G_PROTEIN_RECEP_F1_2"/>
    <property type="match status" value="1"/>
</dbReference>
<name>DOPR3_CAEEL</name>
<evidence type="ECO:0000255" key="1"/>
<evidence type="ECO:0000255" key="2">
    <source>
        <dbReference type="PROSITE-ProRule" id="PRU00521"/>
    </source>
</evidence>
<evidence type="ECO:0000256" key="3">
    <source>
        <dbReference type="SAM" id="MobiDB-lite"/>
    </source>
</evidence>
<evidence type="ECO:0000269" key="4">
    <source>
    </source>
</evidence>
<evidence type="ECO:0000269" key="5">
    <source>
    </source>
</evidence>
<evidence type="ECO:0000269" key="6">
    <source>
    </source>
</evidence>
<evidence type="ECO:0000269" key="7">
    <source>
    </source>
</evidence>
<evidence type="ECO:0000269" key="8">
    <source>
    </source>
</evidence>
<evidence type="ECO:0000269" key="9">
    <source>
    </source>
</evidence>
<evidence type="ECO:0000269" key="10">
    <source>
    </source>
</evidence>
<evidence type="ECO:0000269" key="11">
    <source>
    </source>
</evidence>
<evidence type="ECO:0000303" key="12">
    <source>
    </source>
</evidence>
<evidence type="ECO:0000305" key="13"/>
<evidence type="ECO:0000312" key="14">
    <source>
        <dbReference type="EMBL" id="AAR37416.1"/>
    </source>
</evidence>
<evidence type="ECO:0000312" key="15">
    <source>
        <dbReference type="WormBase" id="T14E8.3a"/>
    </source>
</evidence>
<evidence type="ECO:0000312" key="16">
    <source>
        <dbReference type="WormBase" id="T14E8.3b"/>
    </source>
</evidence>
<evidence type="ECO:0000312" key="17">
    <source>
        <dbReference type="WormBase" id="T14E8.3c"/>
    </source>
</evidence>
<evidence type="ECO:0000312" key="18">
    <source>
        <dbReference type="WormBase" id="T14E8.3d"/>
    </source>
</evidence>
<sequence length="607" mass="68421">MLAGQHHVTDIESPLMVVLWRVAAGVFLPLVPTMAVFGNVLVIMSVFRERSLQTVTNMLIVSLAVSDFMVAIGVMSFGVYYEWNDFKWGLGSFFCHVYQALDVACSTASILNLLAISLDRYIAIGHPISYAQYGARGGRAMISITIVWGVSVAVALPLLLGVNPMEENDLQECELANPYFNMISSIFSFFIPCIAMIILYTIIFRRLRQRERARSLRQAQRSENDKISSALLGGAQIARQMGKHFKNRTDQILLEISFQTSSFPTMSESSEDASTISPMINSFNNFLPKKTPYPSTSIPAIPECGSMPNLTIIERPEAEKEKEISIMDLRDTVEMLDDKYSSAILTSFQTSRSFGEELEEILPFIDGSNSVKHSREQLHTTRSNTSTTRLLDVKPELRSISVPSIQDEKKLSQKSNDLPFSHQNGTHKQKLLPNPGILMKSKSTTLLKTNGYMDTDSLNRNSHKKSLADLLANDEFSFSDSMRVYKNRLFKSLSRATSGWNKPRPSRHMVKKATKQMRREHKATVTLAVVLAVFLFCWLPFFVLHLSNSICLIIDENSACVGFLPLYLATWLGYLNSSLNPLIYTVFDQRFRNAFRNILSCGIFKKR</sequence>
<gene>
    <name evidence="16" type="primary">dop-3</name>
    <name evidence="16" type="ORF">T14E8.3</name>
</gene>
<comment type="function">
    <text evidence="4 5 6 7 8 9 10 11">G-protein coupled receptor which binds to the neurotransmitter dopamine with high affinity leading to the activation of an associated G-protein and downstream signaling pathways (PubMed:15378064, PubMed:16001968). Couples to G-proteins to inhibit adenylate cyclase (AC) activity and cAMP production (PubMed:15378064, PubMed:16001968). Antagonizes the D1-like dopamine receptor dop-1 to negatively regulate the rate of locomotion (PubMed:15378064). Negatively regulates locomotion through the activation of goa-1 subunit proteins which inactivates the unc-77/nca-1 and nca-2 ion-channels in the command interneurons (PubMed:28968387). Inhibits early-stage swimming by modulating the unc-77/nca-1 and nca-2 ion channels of premotor interneurons (PubMed:33796839). In GABAergic, RIC, and SIA neurons, antagonizes the function of dop-1 to play a role in behavioral plasticity and regulate the decision-making process when conflicting alternatives are present (PubMed:25536037). Antagonizes octopamine signaling in response to food by promoting the dopamine-mediated suppression of crh-1/CREB1 transcription factor activation in cholinergic SIA neurons (PubMed:19609300). This is most likely in association with the G(o)-alpha G-protein subunit goa-1 (PubMed:19609300). Promotes male mating behavior by antagonizing acetylcholine signaling to control the protrusion of copulatory spicules from the tail of males during hermaphrodite vulval location (PubMed:23166505). Under mitochondria stress, plays a role in bacterial preference, resulting in learned avoidance behavior (PubMed:35074444).</text>
</comment>
<comment type="subcellular location">
    <subcellularLocation>
        <location evidence="13">Cell membrane</location>
        <topology evidence="1">Multi-pass membrane protein</topology>
    </subcellularLocation>
</comment>
<comment type="alternative products">
    <event type="alternative splicing"/>
    <isoform>
        <id>Q6RYS9-1</id>
        <name evidence="16">b</name>
        <sequence type="displayed"/>
    </isoform>
    <isoform>
        <id>Q6RYS9-2</id>
        <name evidence="15">a</name>
        <sequence type="described" ref="VSP_052258"/>
    </isoform>
    <isoform>
        <id>Q6RYS9-3</id>
        <name evidence="17">c</name>
        <sequence type="described" ref="VSP_052257 VSP_052258"/>
    </isoform>
    <isoform>
        <id>Q6RYS9-4</id>
        <name evidence="18">d</name>
        <name evidence="12">DOP-3nf</name>
        <sequence type="described" ref="VSP_052257 VSP_052259 VSP_052260"/>
    </isoform>
</comment>
<comment type="tissue specificity">
    <text evidence="4 6 7 9 10">Expressed in the neurons of the head, ventral cord and tail with weak expression observed in body wall muscles and PVD neurons (PubMed:15378064). In the ventral cord, expressed strongly in GABAergic neurons with weaker expression in cholinergic motor neurons (PubMed:15378064). Expressed in cholinergic SIA neurons and octopaminergic RIC neurons (PubMed:19609300). In males, expressed in the dorsal and ventral spicule protractor and retractor muscles, and the sensory post-cloacal sensilla B (PCB) neuron (PubMed:23166505). Expressed in the head acetylcholine neurons (PubMed:28968387). Expressed in the AVA, AVB, AVD and AVE command interneurons (PubMed:28968387). Expressed in premotor interneurons (PubMed:33796839).</text>
</comment>
<comment type="disruption phenotype">
    <text evidence="9 10 11">Does not result in the 'fainting' phenotype where worms arrest locomotion and acquire a straightened posture (PubMed:28968387). Suppresses slow locomotion in grk-2 background animals (PubMed:28968387). Does not affect the body bend swimming frequency of animals (PubMed:33796839). Restores early-stage body bend swimming frequency in grk-2 background animals (PubMed:28968387, PubMed:33796839). Significantly reduces learned bacterial aversion induced by mitochondrial insults (PubMed:35074444). Rescues learned avoidance behavior in cat-2 background animals (PubMed:35074444).</text>
</comment>
<comment type="similarity">
    <text evidence="2">Belongs to the G-protein coupled receptor 1 family.</text>
</comment>
<accession>Q6RYS9</accession>
<accession>Q3HKC0</accession>
<accession>Q3HKC1</accession>
<accession>Q3HKC2</accession>
<protein>
    <recommendedName>
        <fullName evidence="16">Dopamine receptor 3</fullName>
    </recommendedName>
    <alternativeName>
        <fullName evidence="13">Dopamine D2-like receptor dop-3</fullName>
    </alternativeName>
</protein>
<reference evidence="13 14" key="1">
    <citation type="journal article" date="2004" name="Nat. Neurosci.">
        <title>Mechanism of extrasynaptic dopamine signaling in Caenorhabditis elegans.</title>
        <authorList>
            <person name="Chase D.L."/>
            <person name="Pepper J.S."/>
            <person name="Koelle M.R."/>
        </authorList>
    </citation>
    <scope>NUCLEOTIDE SEQUENCE [MRNA] (ISOFORM B)</scope>
    <scope>FUNCTION</scope>
    <scope>TISSUE SPECIFICITY</scope>
</reference>
<reference evidence="13" key="2">
    <citation type="journal article" date="2005" name="J. Neurochem.">
        <title>Characterization of a novel D2-like dopamine receptor with a truncated splice variant and a D1-like dopamine receptor unique to invertebrates from Caenorhabditis elegans.</title>
        <authorList>
            <person name="Sugiura M."/>
            <person name="Fuke S."/>
            <person name="Suo S."/>
            <person name="Sasagawa N."/>
            <person name="Van Tol H.H.M."/>
            <person name="Ishiura S."/>
        </authorList>
    </citation>
    <scope>NUCLEOTIDE SEQUENCE [MRNA] (ISOFORMS C AND D)</scope>
    <scope>FUNCTION</scope>
    <scope>MUTAGENESIS OF ASP-102 AND SER-184</scope>
</reference>
<reference key="3">
    <citation type="journal article" date="1998" name="Science">
        <title>Genome sequence of the nematode C. elegans: a platform for investigating biology.</title>
        <authorList>
            <consortium name="The C. elegans sequencing consortium"/>
        </authorList>
    </citation>
    <scope>NUCLEOTIDE SEQUENCE [LARGE SCALE GENOMIC DNA]</scope>
    <source>
        <strain>Bristol N2</strain>
    </source>
</reference>
<reference key="4">
    <citation type="journal article" date="2009" name="EMBO J.">
        <title>Dopamine counteracts octopamine signalling in a neural circuit mediating food response in C. elegans.</title>
        <authorList>
            <person name="Suo S."/>
            <person name="Culotti J.G."/>
            <person name="Van Tol H.H."/>
        </authorList>
    </citation>
    <scope>FUNCTION</scope>
    <scope>TISSUE SPECIFICITY</scope>
</reference>
<reference key="5">
    <citation type="journal article" date="2012" name="PLoS Genet.">
        <title>C. elegans dopaminergic D2-like receptors delimit recurrent cholinergic-mediated motor programs during a goal-oriented behavior.</title>
        <authorList>
            <person name="Correa P."/>
            <person name="LeBoeuf B."/>
            <person name="Garcia L.R."/>
        </authorList>
    </citation>
    <scope>FUNCTION</scope>
    <scope>TISSUE SPECIFICITY</scope>
</reference>
<reference key="6">
    <citation type="journal article" date="2014" name="PLoS ONE">
        <title>Dopamine receptors antagonistically regulate behavioral choice between conflicting alternatives in C. elegans.</title>
        <authorList>
            <person name="Wang D."/>
            <person name="Yu Y."/>
            <person name="Li Y."/>
            <person name="Wang Y."/>
            <person name="Wang D."/>
        </authorList>
    </citation>
    <scope>FUNCTION</scope>
</reference>
<reference evidence="13" key="7">
    <citation type="journal article" date="2017" name="PLoS Genet.">
        <title>Dopamine negatively modulates the NCA ion channels in C. elegans.</title>
        <authorList>
            <person name="Topalidou I."/>
            <person name="Cooper K."/>
            <person name="Pereira L."/>
            <person name="Ailion M."/>
        </authorList>
    </citation>
    <scope>FUNCTION</scope>
    <scope>TISSUE SPECIFICITY</scope>
    <scope>DISRUPTION PHENOTYPE</scope>
</reference>
<reference evidence="13" key="8">
    <citation type="journal article" date="2021" name="IScience">
        <title>Dopamine receptor DOP-1 engages a sleep pathway to modulate swimming in C. elegans.</title>
        <authorList>
            <person name="Xu Y."/>
            <person name="Zhang L."/>
            <person name="Liu Y."/>
            <person name="Topalidou I."/>
            <person name="Hassinan C."/>
            <person name="Ailion M."/>
            <person name="Zhao Z."/>
            <person name="Wang T."/>
            <person name="Chen Z."/>
            <person name="Bai J."/>
        </authorList>
    </citation>
    <scope>FUNCTION</scope>
    <scope>TISSUE SPECIFICITY</scope>
    <scope>DISRUPTION PHENOTYPE</scope>
</reference>
<reference evidence="13" key="9">
    <citation type="journal article" date="2022" name="Neurosci. Res.">
        <title>A role for dopamine in C. elegans avoidance behavior induced by mitochondrial stress.</title>
        <authorList>
            <person name="Chou S.H."/>
            <person name="Chen Y.J."/>
            <person name="Liao C.P."/>
            <person name="Pan C.L."/>
        </authorList>
    </citation>
    <scope>FUNCTION</scope>
    <scope>DISRUPTION PHENOTYPE</scope>
</reference>
<organism>
    <name type="scientific">Caenorhabditis elegans</name>
    <dbReference type="NCBI Taxonomy" id="6239"/>
    <lineage>
        <taxon>Eukaryota</taxon>
        <taxon>Metazoa</taxon>
        <taxon>Ecdysozoa</taxon>
        <taxon>Nematoda</taxon>
        <taxon>Chromadorea</taxon>
        <taxon>Rhabditida</taxon>
        <taxon>Rhabditina</taxon>
        <taxon>Rhabditomorpha</taxon>
        <taxon>Rhabditoidea</taxon>
        <taxon>Rhabditidae</taxon>
        <taxon>Peloderinae</taxon>
        <taxon>Caenorhabditis</taxon>
    </lineage>
</organism>